<sequence>MPHSNISRAPRQHLTERVLQAKTAKNLTWAGLAEGTGLSVVYVTAALLGQHPLPQAVAEVVAERLGLDRDAVAELQTIPLRGNVEDVSSDPTIYRFHEMVQVYGTTLKALVHEQFGDGIISAINFKLDIKKVDDPEGGERAVITLDGKFLPYKPF</sequence>
<gene>
    <name evidence="1" type="primary">cynS</name>
    <name type="ordered locus">Psyr_3483</name>
</gene>
<evidence type="ECO:0000255" key="1">
    <source>
        <dbReference type="HAMAP-Rule" id="MF_00535"/>
    </source>
</evidence>
<keyword id="KW-0456">Lyase</keyword>
<comment type="function">
    <text evidence="1">Catalyzes the reaction of cyanate with bicarbonate to produce ammonia and carbon dioxide.</text>
</comment>
<comment type="catalytic activity">
    <reaction evidence="1">
        <text>cyanate + hydrogencarbonate + 3 H(+) = NH4(+) + 2 CO2</text>
        <dbReference type="Rhea" id="RHEA:11120"/>
        <dbReference type="ChEBI" id="CHEBI:15378"/>
        <dbReference type="ChEBI" id="CHEBI:16526"/>
        <dbReference type="ChEBI" id="CHEBI:17544"/>
        <dbReference type="ChEBI" id="CHEBI:28938"/>
        <dbReference type="ChEBI" id="CHEBI:29195"/>
        <dbReference type="EC" id="4.2.1.104"/>
    </reaction>
</comment>
<comment type="similarity">
    <text evidence="1">Belongs to the cyanase family.</text>
</comment>
<accession>Q4ZQQ7</accession>
<proteinExistence type="inferred from homology"/>
<dbReference type="EC" id="4.2.1.104" evidence="1"/>
<dbReference type="EMBL" id="CP000075">
    <property type="protein sequence ID" value="AAY38515.1"/>
    <property type="molecule type" value="Genomic_DNA"/>
</dbReference>
<dbReference type="RefSeq" id="WP_003404332.1">
    <property type="nucleotide sequence ID" value="NC_007005.1"/>
</dbReference>
<dbReference type="RefSeq" id="YP_236553.1">
    <property type="nucleotide sequence ID" value="NC_007005.1"/>
</dbReference>
<dbReference type="SMR" id="Q4ZQQ7"/>
<dbReference type="STRING" id="205918.Psyr_3483"/>
<dbReference type="KEGG" id="psb:Psyr_3483"/>
<dbReference type="PATRIC" id="fig|205918.7.peg.3569"/>
<dbReference type="eggNOG" id="COG1513">
    <property type="taxonomic scope" value="Bacteria"/>
</dbReference>
<dbReference type="HOGENOM" id="CLU_103452_1_1_6"/>
<dbReference type="OrthoDB" id="9785870at2"/>
<dbReference type="Proteomes" id="UP000000426">
    <property type="component" value="Chromosome"/>
</dbReference>
<dbReference type="GO" id="GO:0008824">
    <property type="term" value="F:cyanate hydratase activity"/>
    <property type="evidence" value="ECO:0007669"/>
    <property type="project" value="UniProtKB-UniRule"/>
</dbReference>
<dbReference type="GO" id="GO:0003677">
    <property type="term" value="F:DNA binding"/>
    <property type="evidence" value="ECO:0007669"/>
    <property type="project" value="InterPro"/>
</dbReference>
<dbReference type="GO" id="GO:0009439">
    <property type="term" value="P:cyanate metabolic process"/>
    <property type="evidence" value="ECO:0007669"/>
    <property type="project" value="UniProtKB-UniRule"/>
</dbReference>
<dbReference type="CDD" id="cd00559">
    <property type="entry name" value="Cyanase_C"/>
    <property type="match status" value="1"/>
</dbReference>
<dbReference type="Gene3D" id="3.30.1160.10">
    <property type="entry name" value="Cyanate lyase, C-terminal domain"/>
    <property type="match status" value="1"/>
</dbReference>
<dbReference type="Gene3D" id="1.10.260.40">
    <property type="entry name" value="lambda repressor-like DNA-binding domains"/>
    <property type="match status" value="1"/>
</dbReference>
<dbReference type="HAMAP" id="MF_00535">
    <property type="entry name" value="Cyanate_hydrat"/>
    <property type="match status" value="1"/>
</dbReference>
<dbReference type="InterPro" id="IPR008076">
    <property type="entry name" value="Cyanase"/>
</dbReference>
<dbReference type="InterPro" id="IPR003712">
    <property type="entry name" value="Cyanate_lyase_C"/>
</dbReference>
<dbReference type="InterPro" id="IPR036581">
    <property type="entry name" value="Cyanate_lyase_C_sf"/>
</dbReference>
<dbReference type="InterPro" id="IPR048564">
    <property type="entry name" value="CYNS_N"/>
</dbReference>
<dbReference type="InterPro" id="IPR010982">
    <property type="entry name" value="Lambda_DNA-bd_dom_sf"/>
</dbReference>
<dbReference type="NCBIfam" id="TIGR00673">
    <property type="entry name" value="cynS"/>
    <property type="match status" value="1"/>
</dbReference>
<dbReference type="NCBIfam" id="NF002773">
    <property type="entry name" value="PRK02866.1"/>
    <property type="match status" value="1"/>
</dbReference>
<dbReference type="PANTHER" id="PTHR34186">
    <property type="entry name" value="CYANATE HYDRATASE"/>
    <property type="match status" value="1"/>
</dbReference>
<dbReference type="PANTHER" id="PTHR34186:SF2">
    <property type="entry name" value="CYANATE HYDRATASE"/>
    <property type="match status" value="1"/>
</dbReference>
<dbReference type="Pfam" id="PF02560">
    <property type="entry name" value="Cyanate_lyase"/>
    <property type="match status" value="1"/>
</dbReference>
<dbReference type="Pfam" id="PF21291">
    <property type="entry name" value="CYNS_N"/>
    <property type="match status" value="1"/>
</dbReference>
<dbReference type="PIRSF" id="PIRSF001263">
    <property type="entry name" value="Cyanate_hydratas"/>
    <property type="match status" value="1"/>
</dbReference>
<dbReference type="PRINTS" id="PR01693">
    <property type="entry name" value="CYANASE"/>
</dbReference>
<dbReference type="SMART" id="SM01116">
    <property type="entry name" value="Cyanate_lyase"/>
    <property type="match status" value="1"/>
</dbReference>
<dbReference type="SUPFAM" id="SSF55234">
    <property type="entry name" value="Cyanase C-terminal domain"/>
    <property type="match status" value="1"/>
</dbReference>
<dbReference type="SUPFAM" id="SSF47413">
    <property type="entry name" value="lambda repressor-like DNA-binding domains"/>
    <property type="match status" value="1"/>
</dbReference>
<organism>
    <name type="scientific">Pseudomonas syringae pv. syringae (strain B728a)</name>
    <dbReference type="NCBI Taxonomy" id="205918"/>
    <lineage>
        <taxon>Bacteria</taxon>
        <taxon>Pseudomonadati</taxon>
        <taxon>Pseudomonadota</taxon>
        <taxon>Gammaproteobacteria</taxon>
        <taxon>Pseudomonadales</taxon>
        <taxon>Pseudomonadaceae</taxon>
        <taxon>Pseudomonas</taxon>
        <taxon>Pseudomonas syringae</taxon>
    </lineage>
</organism>
<name>CYNS_PSEU2</name>
<reference key="1">
    <citation type="journal article" date="2005" name="Proc. Natl. Acad. Sci. U.S.A.">
        <title>Comparison of the complete genome sequences of Pseudomonas syringae pv. syringae B728a and pv. tomato DC3000.</title>
        <authorList>
            <person name="Feil H."/>
            <person name="Feil W.S."/>
            <person name="Chain P."/>
            <person name="Larimer F."/>
            <person name="Dibartolo G."/>
            <person name="Copeland A."/>
            <person name="Lykidis A."/>
            <person name="Trong S."/>
            <person name="Nolan M."/>
            <person name="Goltsman E."/>
            <person name="Thiel J."/>
            <person name="Malfatti S."/>
            <person name="Loper J.E."/>
            <person name="Lapidus A."/>
            <person name="Detter J.C."/>
            <person name="Land M."/>
            <person name="Richardson P.M."/>
            <person name="Kyrpides N.C."/>
            <person name="Ivanova N."/>
            <person name="Lindow S.E."/>
        </authorList>
    </citation>
    <scope>NUCLEOTIDE SEQUENCE [LARGE SCALE GENOMIC DNA]</scope>
    <source>
        <strain>B728a</strain>
    </source>
</reference>
<protein>
    <recommendedName>
        <fullName evidence="1">Cyanate hydratase</fullName>
        <shortName evidence="1">Cyanase</shortName>
        <ecNumber evidence="1">4.2.1.104</ecNumber>
    </recommendedName>
    <alternativeName>
        <fullName evidence="1">Cyanate hydrolase</fullName>
    </alternativeName>
    <alternativeName>
        <fullName evidence="1">Cyanate lyase</fullName>
    </alternativeName>
</protein>
<feature type="chain" id="PRO_1000051487" description="Cyanate hydratase">
    <location>
        <begin position="1"/>
        <end position="155"/>
    </location>
</feature>
<feature type="active site" evidence="1">
    <location>
        <position position="95"/>
    </location>
</feature>
<feature type="active site" evidence="1">
    <location>
        <position position="98"/>
    </location>
</feature>
<feature type="active site" evidence="1">
    <location>
        <position position="121"/>
    </location>
</feature>